<protein>
    <recommendedName>
        <fullName evidence="1">Uracil phosphoribosyltransferase</fullName>
        <ecNumber evidence="1">2.4.2.9</ecNumber>
    </recommendedName>
    <alternativeName>
        <fullName evidence="1">UMP pyrophosphorylase</fullName>
    </alternativeName>
    <alternativeName>
        <fullName evidence="1">UPRTase</fullName>
    </alternativeName>
</protein>
<reference key="1">
    <citation type="journal article" date="2001" name="J. Bacteriol.">
        <title>Genome sequence and comparative analysis of the solvent-producing bacterium Clostridium acetobutylicum.</title>
        <authorList>
            <person name="Noelling J."/>
            <person name="Breton G."/>
            <person name="Omelchenko M.V."/>
            <person name="Makarova K.S."/>
            <person name="Zeng Q."/>
            <person name="Gibson R."/>
            <person name="Lee H.M."/>
            <person name="Dubois J."/>
            <person name="Qiu D."/>
            <person name="Hitti J."/>
            <person name="Wolf Y.I."/>
            <person name="Tatusov R.L."/>
            <person name="Sabathe F."/>
            <person name="Doucette-Stamm L.A."/>
            <person name="Soucaille P."/>
            <person name="Daly M.J."/>
            <person name="Bennett G.N."/>
            <person name="Koonin E.V."/>
            <person name="Smith D.R."/>
        </authorList>
    </citation>
    <scope>NUCLEOTIDE SEQUENCE [LARGE SCALE GENOMIC DNA]</scope>
    <source>
        <strain>ATCC 824 / DSM 792 / JCM 1419 / IAM 19013 / LMG 5710 / NBRC 13948 / NRRL B-527 / VKM B-1787 / 2291 / W</strain>
    </source>
</reference>
<feature type="chain" id="PRO_0000120815" description="Uracil phosphoribosyltransferase">
    <location>
        <begin position="1"/>
        <end position="209"/>
    </location>
</feature>
<feature type="binding site" evidence="1">
    <location>
        <position position="79"/>
    </location>
    <ligand>
        <name>5-phospho-alpha-D-ribose 1-diphosphate</name>
        <dbReference type="ChEBI" id="CHEBI:58017"/>
    </ligand>
</feature>
<feature type="binding site" evidence="1">
    <location>
        <position position="104"/>
    </location>
    <ligand>
        <name>5-phospho-alpha-D-ribose 1-diphosphate</name>
        <dbReference type="ChEBI" id="CHEBI:58017"/>
    </ligand>
</feature>
<feature type="binding site" evidence="1">
    <location>
        <begin position="131"/>
        <end position="139"/>
    </location>
    <ligand>
        <name>5-phospho-alpha-D-ribose 1-diphosphate</name>
        <dbReference type="ChEBI" id="CHEBI:58017"/>
    </ligand>
</feature>
<feature type="binding site" evidence="1">
    <location>
        <position position="194"/>
    </location>
    <ligand>
        <name>uracil</name>
        <dbReference type="ChEBI" id="CHEBI:17568"/>
    </ligand>
</feature>
<feature type="binding site" evidence="1">
    <location>
        <begin position="199"/>
        <end position="201"/>
    </location>
    <ligand>
        <name>uracil</name>
        <dbReference type="ChEBI" id="CHEBI:17568"/>
    </ligand>
</feature>
<feature type="binding site" evidence="1">
    <location>
        <position position="200"/>
    </location>
    <ligand>
        <name>5-phospho-alpha-D-ribose 1-diphosphate</name>
        <dbReference type="ChEBI" id="CHEBI:58017"/>
    </ligand>
</feature>
<dbReference type="EC" id="2.4.2.9" evidence="1"/>
<dbReference type="EMBL" id="AE001437">
    <property type="protein sequence ID" value="AAK80822.1"/>
    <property type="molecule type" value="Genomic_DNA"/>
</dbReference>
<dbReference type="PIR" id="C97254">
    <property type="entry name" value="C97254"/>
</dbReference>
<dbReference type="RefSeq" id="NP_349482.1">
    <property type="nucleotide sequence ID" value="NC_003030.1"/>
</dbReference>
<dbReference type="RefSeq" id="WP_010966163.1">
    <property type="nucleotide sequence ID" value="NC_003030.1"/>
</dbReference>
<dbReference type="SMR" id="Q97F73"/>
<dbReference type="STRING" id="272562.CA_C2879"/>
<dbReference type="GeneID" id="44999367"/>
<dbReference type="KEGG" id="cac:CA_C2879"/>
<dbReference type="PATRIC" id="fig|272562.8.peg.3063"/>
<dbReference type="eggNOG" id="COG0035">
    <property type="taxonomic scope" value="Bacteria"/>
</dbReference>
<dbReference type="HOGENOM" id="CLU_067096_2_2_9"/>
<dbReference type="OrthoDB" id="9781675at2"/>
<dbReference type="UniPathway" id="UPA00574">
    <property type="reaction ID" value="UER00636"/>
</dbReference>
<dbReference type="Proteomes" id="UP000000814">
    <property type="component" value="Chromosome"/>
</dbReference>
<dbReference type="GO" id="GO:0005525">
    <property type="term" value="F:GTP binding"/>
    <property type="evidence" value="ECO:0007669"/>
    <property type="project" value="UniProtKB-KW"/>
</dbReference>
<dbReference type="GO" id="GO:0000287">
    <property type="term" value="F:magnesium ion binding"/>
    <property type="evidence" value="ECO:0007669"/>
    <property type="project" value="UniProtKB-UniRule"/>
</dbReference>
<dbReference type="GO" id="GO:0004845">
    <property type="term" value="F:uracil phosphoribosyltransferase activity"/>
    <property type="evidence" value="ECO:0007669"/>
    <property type="project" value="UniProtKB-UniRule"/>
</dbReference>
<dbReference type="GO" id="GO:0044206">
    <property type="term" value="P:UMP salvage"/>
    <property type="evidence" value="ECO:0007669"/>
    <property type="project" value="UniProtKB-UniRule"/>
</dbReference>
<dbReference type="GO" id="GO:0006223">
    <property type="term" value="P:uracil salvage"/>
    <property type="evidence" value="ECO:0007669"/>
    <property type="project" value="InterPro"/>
</dbReference>
<dbReference type="CDD" id="cd06223">
    <property type="entry name" value="PRTases_typeI"/>
    <property type="match status" value="1"/>
</dbReference>
<dbReference type="FunFam" id="3.40.50.2020:FF:000003">
    <property type="entry name" value="Uracil phosphoribosyltransferase"/>
    <property type="match status" value="1"/>
</dbReference>
<dbReference type="Gene3D" id="3.40.50.2020">
    <property type="match status" value="1"/>
</dbReference>
<dbReference type="HAMAP" id="MF_01218_B">
    <property type="entry name" value="Upp_B"/>
    <property type="match status" value="1"/>
</dbReference>
<dbReference type="InterPro" id="IPR000836">
    <property type="entry name" value="PRibTrfase_dom"/>
</dbReference>
<dbReference type="InterPro" id="IPR029057">
    <property type="entry name" value="PRTase-like"/>
</dbReference>
<dbReference type="InterPro" id="IPR034332">
    <property type="entry name" value="Upp_B"/>
</dbReference>
<dbReference type="InterPro" id="IPR050054">
    <property type="entry name" value="UPRTase/APRTase"/>
</dbReference>
<dbReference type="InterPro" id="IPR005765">
    <property type="entry name" value="Ura_phspho_trans"/>
</dbReference>
<dbReference type="NCBIfam" id="NF001097">
    <property type="entry name" value="PRK00129.1"/>
    <property type="match status" value="1"/>
</dbReference>
<dbReference type="NCBIfam" id="TIGR01091">
    <property type="entry name" value="upp"/>
    <property type="match status" value="1"/>
</dbReference>
<dbReference type="PANTHER" id="PTHR32315">
    <property type="entry name" value="ADENINE PHOSPHORIBOSYLTRANSFERASE"/>
    <property type="match status" value="1"/>
</dbReference>
<dbReference type="PANTHER" id="PTHR32315:SF4">
    <property type="entry name" value="URACIL PHOSPHORIBOSYLTRANSFERASE, CHLOROPLASTIC"/>
    <property type="match status" value="1"/>
</dbReference>
<dbReference type="Pfam" id="PF14681">
    <property type="entry name" value="UPRTase"/>
    <property type="match status" value="1"/>
</dbReference>
<dbReference type="SUPFAM" id="SSF53271">
    <property type="entry name" value="PRTase-like"/>
    <property type="match status" value="1"/>
</dbReference>
<proteinExistence type="inferred from homology"/>
<gene>
    <name evidence="1" type="primary">upp</name>
    <name type="ordered locus">CA_C2879</name>
</gene>
<evidence type="ECO:0000255" key="1">
    <source>
        <dbReference type="HAMAP-Rule" id="MF_01218"/>
    </source>
</evidence>
<sequence length="209" mass="23010">MSKVTQISHPLILHKLAFMRDKKTGSKDFREMVEEVAMLMAYEVTREMQLETVEIETPICITKCKMLAGKKVAIVPILRAGLGMVNGVLKLIPAAKVGHIGLYRDEKTLKPVEYFCKLPQDIEERDIIVTDPMLATGGSAIDAITLLKKRGAKYIRLMCLIGAPEGIAAVQEAHPDVDIYLASIDEKLDENGYIVPGLGDAGDRLFGTK</sequence>
<organism>
    <name type="scientific">Clostridium acetobutylicum (strain ATCC 824 / DSM 792 / JCM 1419 / IAM 19013 / LMG 5710 / NBRC 13948 / NRRL B-527 / VKM B-1787 / 2291 / W)</name>
    <dbReference type="NCBI Taxonomy" id="272562"/>
    <lineage>
        <taxon>Bacteria</taxon>
        <taxon>Bacillati</taxon>
        <taxon>Bacillota</taxon>
        <taxon>Clostridia</taxon>
        <taxon>Eubacteriales</taxon>
        <taxon>Clostridiaceae</taxon>
        <taxon>Clostridium</taxon>
    </lineage>
</organism>
<keyword id="KW-0021">Allosteric enzyme</keyword>
<keyword id="KW-0328">Glycosyltransferase</keyword>
<keyword id="KW-0342">GTP-binding</keyword>
<keyword id="KW-0460">Magnesium</keyword>
<keyword id="KW-0547">Nucleotide-binding</keyword>
<keyword id="KW-1185">Reference proteome</keyword>
<keyword id="KW-0808">Transferase</keyword>
<comment type="function">
    <text evidence="1">Catalyzes the conversion of uracil and 5-phospho-alpha-D-ribose 1-diphosphate (PRPP) to UMP and diphosphate.</text>
</comment>
<comment type="catalytic activity">
    <reaction evidence="1">
        <text>UMP + diphosphate = 5-phospho-alpha-D-ribose 1-diphosphate + uracil</text>
        <dbReference type="Rhea" id="RHEA:13017"/>
        <dbReference type="ChEBI" id="CHEBI:17568"/>
        <dbReference type="ChEBI" id="CHEBI:33019"/>
        <dbReference type="ChEBI" id="CHEBI:57865"/>
        <dbReference type="ChEBI" id="CHEBI:58017"/>
        <dbReference type="EC" id="2.4.2.9"/>
    </reaction>
</comment>
<comment type="cofactor">
    <cofactor evidence="1">
        <name>Mg(2+)</name>
        <dbReference type="ChEBI" id="CHEBI:18420"/>
    </cofactor>
    <text evidence="1">Binds 1 Mg(2+) ion per subunit. The magnesium is bound as Mg-PRPP.</text>
</comment>
<comment type="activity regulation">
    <text evidence="1">Allosterically activated by GTP.</text>
</comment>
<comment type="pathway">
    <text evidence="1">Pyrimidine metabolism; UMP biosynthesis via salvage pathway; UMP from uracil: step 1/1.</text>
</comment>
<comment type="similarity">
    <text evidence="1">Belongs to the UPRTase family.</text>
</comment>
<accession>Q97F73</accession>
<name>UPP_CLOAB</name>